<dbReference type="EMBL" id="X01584">
    <property type="protein sequence ID" value="CAB37934.1"/>
    <property type="status" value="ALT_FRAME"/>
    <property type="molecule type" value="Genomic_DNA"/>
</dbReference>
<dbReference type="EMBL" id="AF016485">
    <property type="protein sequence ID" value="AAC82891.1"/>
    <property type="molecule type" value="Genomic_DNA"/>
</dbReference>
<dbReference type="EMBL" id="AE004437">
    <property type="protein sequence ID" value="AAG19350.1"/>
    <property type="molecule type" value="Genomic_DNA"/>
</dbReference>
<dbReference type="PIR" id="A05113">
    <property type="entry name" value="A05113"/>
</dbReference>
<dbReference type="PIR" id="B84248">
    <property type="entry name" value="B84248"/>
</dbReference>
<dbReference type="PIR" id="T08324">
    <property type="entry name" value="T08324"/>
</dbReference>
<dbReference type="RefSeq" id="WP_010890474.1">
    <property type="nucleotide sequence ID" value="NZ_BK010830.1"/>
</dbReference>
<dbReference type="STRING" id="64091.VNG_0918H"/>
<dbReference type="PaxDb" id="64091-VNG_0918H"/>
<dbReference type="KEGG" id="hal:AAC82891.1"/>
<dbReference type="KEGG" id="hal:VNG_0918H"/>
<dbReference type="HOGENOM" id="CLU_044348_1_2_2"/>
<dbReference type="InParanoid" id="P04137"/>
<dbReference type="OrthoDB" id="250674at2157"/>
<dbReference type="Proteomes" id="UP000000554">
    <property type="component" value="Chromosome"/>
</dbReference>
<dbReference type="Proteomes" id="UP000000554">
    <property type="component" value="Plasmid pNRC100"/>
</dbReference>
<dbReference type="GO" id="GO:0006313">
    <property type="term" value="P:DNA transposition"/>
    <property type="evidence" value="ECO:0000318"/>
    <property type="project" value="GO_Central"/>
</dbReference>
<dbReference type="InterPro" id="IPR024445">
    <property type="entry name" value="Tnp_ISXO2-like"/>
</dbReference>
<dbReference type="InterPro" id="IPR051354">
    <property type="entry name" value="Transposase_27_IS1"/>
</dbReference>
<dbReference type="InterPro" id="IPR024442">
    <property type="entry name" value="Transposase_Zn_ribbon"/>
</dbReference>
<dbReference type="NCBIfam" id="NF033547">
    <property type="entry name" value="transpos_IS1595"/>
    <property type="match status" value="1"/>
</dbReference>
<dbReference type="PANTHER" id="PTHR33293">
    <property type="entry name" value="INSERTION ELEMENT IS1 1 PROTEIN INSB-RELATED"/>
    <property type="match status" value="1"/>
</dbReference>
<dbReference type="PANTHER" id="PTHR33293:SF1">
    <property type="entry name" value="INSERTION ELEMENT IS1 1 PROTEIN INSB-RELATED"/>
    <property type="match status" value="1"/>
</dbReference>
<dbReference type="Pfam" id="PF12762">
    <property type="entry name" value="DDE_Tnp_IS1595"/>
    <property type="match status" value="1"/>
</dbReference>
<dbReference type="Pfam" id="PF12760">
    <property type="entry name" value="Zn_ribbon_IS1595"/>
    <property type="match status" value="1"/>
</dbReference>
<dbReference type="SMART" id="SM01126">
    <property type="entry name" value="DDE_Tnp_IS1595"/>
    <property type="match status" value="1"/>
</dbReference>
<accession>P04137</accession>
<accession>O52011</accession>
<protein>
    <recommendedName>
        <fullName>Uncharacterized protein in transposable element ISH50</fullName>
    </recommendedName>
</protein>
<comment type="sequence caution" evidence="1">
    <conflict type="frameshift">
        <sequence resource="EMBL-CDS" id="CAB37934"/>
    </conflict>
</comment>
<keyword id="KW-0614">Plasmid</keyword>
<keyword id="KW-1185">Reference proteome</keyword>
<keyword id="KW-0814">Transposable element</keyword>
<evidence type="ECO:0000305" key="1"/>
<geneLocation type="plasmid">
    <name>pNRC100</name>
</geneLocation>
<sequence>MMPIKTFVSERRAANLLAQIRWRNGVYCPSCRAESVIRYGSYRVFQRYLCKDCDRTFNDQTGTVFEHSAVALRKWFLAVYTYIRLNTSIRQLDAEIDVSYKTVYRRVQRFLRALDAPRPHLEGPVEIDEFYVKAGLKGRERDQPSRSRGLSTRGRGTYAEDKLPVFVLADRGTGERHVIPAKAATESRIRLLLADRQQESLTVYTDGFRAYDPLDEDDAFTREYVVHGDGEYVNGDVHVNTCESHASLARRWLSPHRGVSKDRLTPYLRAFQLRREVFRKPGKEALKTILETAL</sequence>
<feature type="chain" id="PRO_0000075517" description="Uncharacterized protein in transposable element ISH50">
    <location>
        <begin position="1"/>
        <end position="294"/>
    </location>
</feature>
<organism>
    <name type="scientific">Halobacterium salinarum (strain ATCC 700922 / JCM 11081 / NRC-1)</name>
    <name type="common">Halobacterium halobium</name>
    <dbReference type="NCBI Taxonomy" id="64091"/>
    <lineage>
        <taxon>Archaea</taxon>
        <taxon>Methanobacteriati</taxon>
        <taxon>Methanobacteriota</taxon>
        <taxon>Stenosarchaea group</taxon>
        <taxon>Halobacteria</taxon>
        <taxon>Halobacteriales</taxon>
        <taxon>Halobacteriaceae</taxon>
        <taxon>Halobacterium</taxon>
        <taxon>Halobacterium salinarum NRC-34001</taxon>
    </lineage>
</organism>
<proteinExistence type="predicted"/>
<name>YIH50_HALSA</name>
<reference key="1">
    <citation type="journal article" date="1983" name="Nucleic Acids Res.">
        <title>Structure of the archaebacterial transposable element ISH50.</title>
        <authorList>
            <person name="Xu W.-L."/>
            <person name="Doolittle W.F."/>
        </authorList>
    </citation>
    <scope>NUCLEOTIDE SEQUENCE [GENOMIC DNA]</scope>
</reference>
<reference key="2">
    <citation type="journal article" date="1998" name="Genome Res.">
        <title>Snapshot of a large dynamic replicon in a halophilic archaeon: megaplasmid or minichromosome?</title>
        <authorList>
            <person name="Ng W.V."/>
            <person name="Ciufo S.A."/>
            <person name="Smith T.M."/>
            <person name="Bumgarner R.E."/>
            <person name="Baskin D."/>
            <person name="Faust J."/>
            <person name="Hall B."/>
            <person name="Loretz C."/>
            <person name="Seto J."/>
            <person name="Slagel J."/>
            <person name="Hood L."/>
            <person name="DasSarma S."/>
        </authorList>
    </citation>
    <scope>NUCLEOTIDE SEQUENCE [LARGE SCALE GENOMIC DNA]</scope>
    <source>
        <strain>ATCC 700922 / JCM 11081 / NRC-1</strain>
        <plasmid>pNRC100</plasmid>
    </source>
</reference>
<reference key="3">
    <citation type="journal article" date="2000" name="Proc. Natl. Acad. Sci. U.S.A.">
        <title>Genome sequence of Halobacterium species NRC-1.</title>
        <authorList>
            <person name="Ng W.V."/>
            <person name="Kennedy S.P."/>
            <person name="Mahairas G.G."/>
            <person name="Berquist B."/>
            <person name="Pan M."/>
            <person name="Shukla H.D."/>
            <person name="Lasky S.R."/>
            <person name="Baliga N.S."/>
            <person name="Thorsson V."/>
            <person name="Sbrogna J."/>
            <person name="Swartzell S."/>
            <person name="Weir D."/>
            <person name="Hall J."/>
            <person name="Dahl T.A."/>
            <person name="Welti R."/>
            <person name="Goo Y.A."/>
            <person name="Leithauser B."/>
            <person name="Keller K."/>
            <person name="Cruz R."/>
            <person name="Danson M.J."/>
            <person name="Hough D.W."/>
            <person name="Maddocks D.G."/>
            <person name="Jablonski P.E."/>
            <person name="Krebs M.P."/>
            <person name="Angevine C.M."/>
            <person name="Dale H."/>
            <person name="Isenbarger T.A."/>
            <person name="Peck R.F."/>
            <person name="Pohlschroder M."/>
            <person name="Spudich J.L."/>
            <person name="Jung K.-H."/>
            <person name="Alam M."/>
            <person name="Freitas T."/>
            <person name="Hou S."/>
            <person name="Daniels C.J."/>
            <person name="Dennis P.P."/>
            <person name="Omer A.D."/>
            <person name="Ebhardt H."/>
            <person name="Lowe T.M."/>
            <person name="Liang P."/>
            <person name="Riley M."/>
            <person name="Hood L."/>
            <person name="DasSarma S."/>
        </authorList>
    </citation>
    <scope>NUCLEOTIDE SEQUENCE [LARGE SCALE GENOMIC DNA]</scope>
    <source>
        <strain>ATCC 700922 / JCM 11081 / NRC-1</strain>
    </source>
</reference>
<gene>
    <name type="ordered locus">VNG_0918H</name>
</gene>
<gene>
    <name type="ordered locus">VNG_5149H</name>
</gene>